<gene>
    <name evidence="1" type="primary">engB</name>
    <name type="ordered locus">RPD_0070</name>
</gene>
<sequence length="217" mass="23464">MTDAINPTLIERGRKVFAGDWHFIWASPSIETLPPMAGIEVAFAGRSNVGKSSLINALTGRNALARTSNTPGRTQELIFFDGPTDAGLRLVDMPGYGYAAASKAKVASWTSLIHKFLQGRATLARVYVLIDGRHGLKDVDLDILKTLDKSAVSYQIVFTKADQVKAAELEQRIAATKTVLAKHPAAFPELLMTSSRTGAGMPELRAAMIRLLDERGA</sequence>
<comment type="function">
    <text evidence="1">Necessary for normal cell division and for the maintenance of normal septation.</text>
</comment>
<comment type="cofactor">
    <cofactor evidence="1">
        <name>Mg(2+)</name>
        <dbReference type="ChEBI" id="CHEBI:18420"/>
    </cofactor>
</comment>
<comment type="similarity">
    <text evidence="1">Belongs to the TRAFAC class TrmE-Era-EngA-EngB-Septin-like GTPase superfamily. EngB GTPase family.</text>
</comment>
<dbReference type="EMBL" id="CP000283">
    <property type="protein sequence ID" value="ABE37310.1"/>
    <property type="molecule type" value="Genomic_DNA"/>
</dbReference>
<dbReference type="SMR" id="Q13F29"/>
<dbReference type="STRING" id="316057.RPD_0070"/>
<dbReference type="KEGG" id="rpd:RPD_0070"/>
<dbReference type="eggNOG" id="COG0218">
    <property type="taxonomic scope" value="Bacteria"/>
</dbReference>
<dbReference type="HOGENOM" id="CLU_033732_2_0_5"/>
<dbReference type="BioCyc" id="RPAL316057:RPD_RS00350-MONOMER"/>
<dbReference type="Proteomes" id="UP000001818">
    <property type="component" value="Chromosome"/>
</dbReference>
<dbReference type="GO" id="GO:0005829">
    <property type="term" value="C:cytosol"/>
    <property type="evidence" value="ECO:0007669"/>
    <property type="project" value="TreeGrafter"/>
</dbReference>
<dbReference type="GO" id="GO:0005525">
    <property type="term" value="F:GTP binding"/>
    <property type="evidence" value="ECO:0007669"/>
    <property type="project" value="UniProtKB-UniRule"/>
</dbReference>
<dbReference type="GO" id="GO:0046872">
    <property type="term" value="F:metal ion binding"/>
    <property type="evidence" value="ECO:0007669"/>
    <property type="project" value="UniProtKB-KW"/>
</dbReference>
<dbReference type="GO" id="GO:0000917">
    <property type="term" value="P:division septum assembly"/>
    <property type="evidence" value="ECO:0007669"/>
    <property type="project" value="UniProtKB-KW"/>
</dbReference>
<dbReference type="CDD" id="cd01876">
    <property type="entry name" value="YihA_EngB"/>
    <property type="match status" value="1"/>
</dbReference>
<dbReference type="Gene3D" id="3.40.50.300">
    <property type="entry name" value="P-loop containing nucleotide triphosphate hydrolases"/>
    <property type="match status" value="1"/>
</dbReference>
<dbReference type="HAMAP" id="MF_00321">
    <property type="entry name" value="GTPase_EngB"/>
    <property type="match status" value="1"/>
</dbReference>
<dbReference type="InterPro" id="IPR030393">
    <property type="entry name" value="G_ENGB_dom"/>
</dbReference>
<dbReference type="InterPro" id="IPR006073">
    <property type="entry name" value="GTP-bd"/>
</dbReference>
<dbReference type="InterPro" id="IPR019987">
    <property type="entry name" value="GTP-bd_ribosome_bio_YsxC"/>
</dbReference>
<dbReference type="InterPro" id="IPR027417">
    <property type="entry name" value="P-loop_NTPase"/>
</dbReference>
<dbReference type="NCBIfam" id="TIGR03598">
    <property type="entry name" value="GTPase_YsxC"/>
    <property type="match status" value="1"/>
</dbReference>
<dbReference type="PANTHER" id="PTHR11649:SF13">
    <property type="entry name" value="ENGB-TYPE G DOMAIN-CONTAINING PROTEIN"/>
    <property type="match status" value="1"/>
</dbReference>
<dbReference type="PANTHER" id="PTHR11649">
    <property type="entry name" value="MSS1/TRME-RELATED GTP-BINDING PROTEIN"/>
    <property type="match status" value="1"/>
</dbReference>
<dbReference type="Pfam" id="PF01926">
    <property type="entry name" value="MMR_HSR1"/>
    <property type="match status" value="1"/>
</dbReference>
<dbReference type="SUPFAM" id="SSF52540">
    <property type="entry name" value="P-loop containing nucleoside triphosphate hydrolases"/>
    <property type="match status" value="1"/>
</dbReference>
<dbReference type="PROSITE" id="PS51706">
    <property type="entry name" value="G_ENGB"/>
    <property type="match status" value="1"/>
</dbReference>
<keyword id="KW-0131">Cell cycle</keyword>
<keyword id="KW-0132">Cell division</keyword>
<keyword id="KW-0342">GTP-binding</keyword>
<keyword id="KW-0460">Magnesium</keyword>
<keyword id="KW-0479">Metal-binding</keyword>
<keyword id="KW-0547">Nucleotide-binding</keyword>
<keyword id="KW-0717">Septation</keyword>
<proteinExistence type="inferred from homology"/>
<feature type="chain" id="PRO_0000266932" description="Probable GTP-binding protein EngB">
    <location>
        <begin position="1"/>
        <end position="217"/>
    </location>
</feature>
<feature type="domain" description="EngB-type G" evidence="1">
    <location>
        <begin position="37"/>
        <end position="214"/>
    </location>
</feature>
<feature type="binding site" evidence="1">
    <location>
        <begin position="45"/>
        <end position="52"/>
    </location>
    <ligand>
        <name>GTP</name>
        <dbReference type="ChEBI" id="CHEBI:37565"/>
    </ligand>
</feature>
<feature type="binding site" evidence="1">
    <location>
        <position position="52"/>
    </location>
    <ligand>
        <name>Mg(2+)</name>
        <dbReference type="ChEBI" id="CHEBI:18420"/>
    </ligand>
</feature>
<feature type="binding site" evidence="1">
    <location>
        <begin position="72"/>
        <end position="76"/>
    </location>
    <ligand>
        <name>GTP</name>
        <dbReference type="ChEBI" id="CHEBI:37565"/>
    </ligand>
</feature>
<feature type="binding site" evidence="1">
    <location>
        <position position="74"/>
    </location>
    <ligand>
        <name>Mg(2+)</name>
        <dbReference type="ChEBI" id="CHEBI:18420"/>
    </ligand>
</feature>
<feature type="binding site" evidence="1">
    <location>
        <begin position="92"/>
        <end position="95"/>
    </location>
    <ligand>
        <name>GTP</name>
        <dbReference type="ChEBI" id="CHEBI:37565"/>
    </ligand>
</feature>
<feature type="binding site" evidence="1">
    <location>
        <begin position="159"/>
        <end position="162"/>
    </location>
    <ligand>
        <name>GTP</name>
        <dbReference type="ChEBI" id="CHEBI:37565"/>
    </ligand>
</feature>
<feature type="binding site" evidence="1">
    <location>
        <begin position="193"/>
        <end position="195"/>
    </location>
    <ligand>
        <name>GTP</name>
        <dbReference type="ChEBI" id="CHEBI:37565"/>
    </ligand>
</feature>
<name>ENGB_RHOPS</name>
<protein>
    <recommendedName>
        <fullName evidence="1">Probable GTP-binding protein EngB</fullName>
    </recommendedName>
</protein>
<reference key="1">
    <citation type="submission" date="2006-03" db="EMBL/GenBank/DDBJ databases">
        <title>Complete sequence of Rhodopseudomonas palustris BisB5.</title>
        <authorList>
            <consortium name="US DOE Joint Genome Institute"/>
            <person name="Copeland A."/>
            <person name="Lucas S."/>
            <person name="Lapidus A."/>
            <person name="Barry K."/>
            <person name="Detter J.C."/>
            <person name="Glavina del Rio T."/>
            <person name="Hammon N."/>
            <person name="Israni S."/>
            <person name="Dalin E."/>
            <person name="Tice H."/>
            <person name="Pitluck S."/>
            <person name="Chain P."/>
            <person name="Malfatti S."/>
            <person name="Shin M."/>
            <person name="Vergez L."/>
            <person name="Schmutz J."/>
            <person name="Larimer F."/>
            <person name="Land M."/>
            <person name="Hauser L."/>
            <person name="Pelletier D.A."/>
            <person name="Kyrpides N."/>
            <person name="Lykidis A."/>
            <person name="Oda Y."/>
            <person name="Harwood C.S."/>
            <person name="Richardson P."/>
        </authorList>
    </citation>
    <scope>NUCLEOTIDE SEQUENCE [LARGE SCALE GENOMIC DNA]</scope>
    <source>
        <strain>BisB5</strain>
    </source>
</reference>
<organism>
    <name type="scientific">Rhodopseudomonas palustris (strain BisB5)</name>
    <dbReference type="NCBI Taxonomy" id="316057"/>
    <lineage>
        <taxon>Bacteria</taxon>
        <taxon>Pseudomonadati</taxon>
        <taxon>Pseudomonadota</taxon>
        <taxon>Alphaproteobacteria</taxon>
        <taxon>Hyphomicrobiales</taxon>
        <taxon>Nitrobacteraceae</taxon>
        <taxon>Rhodopseudomonas</taxon>
    </lineage>
</organism>
<evidence type="ECO:0000255" key="1">
    <source>
        <dbReference type="HAMAP-Rule" id="MF_00321"/>
    </source>
</evidence>
<accession>Q13F29</accession>